<evidence type="ECO:0000250" key="1"/>
<evidence type="ECO:0000255" key="2">
    <source>
        <dbReference type="PROSITE-ProRule" id="PRU00686"/>
    </source>
</evidence>
<evidence type="ECO:0000305" key="3"/>
<keyword id="KW-0903">Direct protein sequencing</keyword>
<keyword id="KW-1015">Disulfide bond</keyword>
<keyword id="KW-0249">Electron transport</keyword>
<keyword id="KW-0676">Redox-active center</keyword>
<keyword id="KW-0813">Transport</keyword>
<dbReference type="EMBL" id="X92690">
    <property type="protein sequence ID" value="CAA63372.1"/>
    <property type="molecule type" value="Genomic_DNA"/>
</dbReference>
<dbReference type="EMBL" id="AM406671">
    <property type="protein sequence ID" value="CAL98116.1"/>
    <property type="molecule type" value="Genomic_DNA"/>
</dbReference>
<dbReference type="RefSeq" id="WP_011675987.1">
    <property type="nucleotide sequence ID" value="NC_009004.1"/>
</dbReference>
<dbReference type="SMR" id="Q48708"/>
<dbReference type="STRING" id="416870.llmg_1541"/>
<dbReference type="GeneID" id="61109282"/>
<dbReference type="KEGG" id="llm:llmg_1541"/>
<dbReference type="eggNOG" id="COG0695">
    <property type="taxonomic scope" value="Bacteria"/>
</dbReference>
<dbReference type="HOGENOM" id="CLU_026126_9_0_9"/>
<dbReference type="OrthoDB" id="9795531at2"/>
<dbReference type="PhylomeDB" id="Q48708"/>
<dbReference type="Proteomes" id="UP000000364">
    <property type="component" value="Chromosome"/>
</dbReference>
<dbReference type="GO" id="GO:0009055">
    <property type="term" value="F:electron transfer activity"/>
    <property type="evidence" value="ECO:0007669"/>
    <property type="project" value="TreeGrafter"/>
</dbReference>
<dbReference type="GO" id="GO:0045454">
    <property type="term" value="P:cell redox homeostasis"/>
    <property type="evidence" value="ECO:0007669"/>
    <property type="project" value="InterPro"/>
</dbReference>
<dbReference type="CDD" id="cd02976">
    <property type="entry name" value="NrdH"/>
    <property type="match status" value="1"/>
</dbReference>
<dbReference type="Gene3D" id="3.40.30.10">
    <property type="entry name" value="Glutaredoxin"/>
    <property type="match status" value="1"/>
</dbReference>
<dbReference type="InterPro" id="IPR011909">
    <property type="entry name" value="GlrX_NrdH"/>
</dbReference>
<dbReference type="InterPro" id="IPR002109">
    <property type="entry name" value="Glutaredoxin"/>
</dbReference>
<dbReference type="InterPro" id="IPR051548">
    <property type="entry name" value="Grx-like_ET"/>
</dbReference>
<dbReference type="InterPro" id="IPR036249">
    <property type="entry name" value="Thioredoxin-like_sf"/>
</dbReference>
<dbReference type="NCBIfam" id="TIGR02194">
    <property type="entry name" value="GlrX_NrdH"/>
    <property type="match status" value="1"/>
</dbReference>
<dbReference type="PANTHER" id="PTHR34386">
    <property type="entry name" value="GLUTAREDOXIN"/>
    <property type="match status" value="1"/>
</dbReference>
<dbReference type="PANTHER" id="PTHR34386:SF1">
    <property type="entry name" value="GLUTAREDOXIN-LIKE PROTEIN NRDH"/>
    <property type="match status" value="1"/>
</dbReference>
<dbReference type="Pfam" id="PF00462">
    <property type="entry name" value="Glutaredoxin"/>
    <property type="match status" value="1"/>
</dbReference>
<dbReference type="SUPFAM" id="SSF52833">
    <property type="entry name" value="Thioredoxin-like"/>
    <property type="match status" value="1"/>
</dbReference>
<dbReference type="PROSITE" id="PS51354">
    <property type="entry name" value="GLUTAREDOXIN_2"/>
    <property type="match status" value="1"/>
</dbReference>
<gene>
    <name type="primary">nrdH</name>
    <name type="ordered locus">llmg_1541</name>
</gene>
<comment type="function">
    <text>Electron transport system for the ribonucleotide reductase system NrdEF.</text>
</comment>
<comment type="similarity">
    <text evidence="3">Belongs to the glutaredoxin family.</text>
</comment>
<proteinExistence type="evidence at protein level"/>
<reference key="1">
    <citation type="journal article" date="1996" name="J. Biol. Chem.">
        <title>The ribonucleotide reductase system of Lactococcus lactis. Characterization of an NrdEF enzyme and a new electron transport protein.</title>
        <authorList>
            <person name="Jordan A."/>
            <person name="Pontis E."/>
            <person name="Aaslund F."/>
            <person name="Hellman U."/>
            <person name="Gibert I."/>
            <person name="Reichard P."/>
        </authorList>
    </citation>
    <scope>NUCLEOTIDE SEQUENCE [GENOMIC DNA]</scope>
    <scope>PROTEIN SEQUENCE OF 1-40</scope>
</reference>
<reference key="2">
    <citation type="journal article" date="2007" name="J. Bacteriol.">
        <title>The complete genome sequence of the lactic acid bacterial paradigm Lactococcus lactis subsp. cremoris MG1363.</title>
        <authorList>
            <person name="Wegmann U."/>
            <person name="O'Connell-Motherway M."/>
            <person name="Zomer A."/>
            <person name="Buist G."/>
            <person name="Shearman C."/>
            <person name="Canchaya C."/>
            <person name="Ventura M."/>
            <person name="Goesmann A."/>
            <person name="Gasson M.J."/>
            <person name="Kuipers O.P."/>
            <person name="van Sinderen D."/>
            <person name="Kok J."/>
        </authorList>
    </citation>
    <scope>NUCLEOTIDE SEQUENCE [LARGE SCALE GENOMIC DNA]</scope>
    <source>
        <strain>MG1363</strain>
    </source>
</reference>
<sequence>MVTVYSKNNCMQCKMVKKWLSEHEIAFNEINIDEQPEFVEKVIEMGFRAAPVITKDDFAFSGFRPSELAKLA</sequence>
<organism>
    <name type="scientific">Lactococcus lactis subsp. cremoris (strain MG1363)</name>
    <dbReference type="NCBI Taxonomy" id="416870"/>
    <lineage>
        <taxon>Bacteria</taxon>
        <taxon>Bacillati</taxon>
        <taxon>Bacillota</taxon>
        <taxon>Bacilli</taxon>
        <taxon>Lactobacillales</taxon>
        <taxon>Streptococcaceae</taxon>
        <taxon>Lactococcus</taxon>
        <taxon>Lactococcus cremoris subsp. cremoris</taxon>
    </lineage>
</organism>
<accession>Q48708</accession>
<accession>A2RLE9</accession>
<feature type="chain" id="PRO_0000141644" description="Glutaredoxin-like protein NrdH">
    <location>
        <begin position="1"/>
        <end position="72"/>
    </location>
</feature>
<feature type="domain" description="Glutaredoxin" evidence="2">
    <location>
        <begin position="1"/>
        <end position="72"/>
    </location>
</feature>
<feature type="disulfide bond" description="Redox-active" evidence="1">
    <location>
        <begin position="10"/>
        <end position="13"/>
    </location>
</feature>
<feature type="sequence conflict" description="In Ref. 1; AA sequence." evidence="3" ref="1">
    <original>W</original>
    <variation>C</variation>
    <location>
        <position position="19"/>
    </location>
</feature>
<name>NRDH_LACLM</name>
<protein>
    <recommendedName>
        <fullName>Glutaredoxin-like protein NrdH</fullName>
    </recommendedName>
</protein>